<feature type="chain" id="PRO_1000079792" description="Large ribosomal subunit protein bL12">
    <location>
        <begin position="1"/>
        <end position="123"/>
    </location>
</feature>
<proteinExistence type="inferred from homology"/>
<reference key="1">
    <citation type="submission" date="2007-05" db="EMBL/GenBank/DDBJ databases">
        <title>Complete sequence of Dehalococcoides sp. BAV1.</title>
        <authorList>
            <consortium name="US DOE Joint Genome Institute"/>
            <person name="Copeland A."/>
            <person name="Lucas S."/>
            <person name="Lapidus A."/>
            <person name="Barry K."/>
            <person name="Detter J.C."/>
            <person name="Glavina del Rio T."/>
            <person name="Hammon N."/>
            <person name="Israni S."/>
            <person name="Pitluck S."/>
            <person name="Lowry S."/>
            <person name="Clum A."/>
            <person name="Schmutz J."/>
            <person name="Larimer F."/>
            <person name="Land M."/>
            <person name="Hauser L."/>
            <person name="Kyrpides N."/>
            <person name="Kim E."/>
            <person name="Ritalahti K.M."/>
            <person name="Loeffler F."/>
            <person name="Richardson P."/>
        </authorList>
    </citation>
    <scope>NUCLEOTIDE SEQUENCE [LARGE SCALE GENOMIC DNA]</scope>
    <source>
        <strain>ATCC BAA-2100 / JCM 16839 / KCTC 5957 / BAV1</strain>
    </source>
</reference>
<dbReference type="EMBL" id="CP000688">
    <property type="protein sequence ID" value="ABQ17463.1"/>
    <property type="molecule type" value="Genomic_DNA"/>
</dbReference>
<dbReference type="SMR" id="A5FQQ9"/>
<dbReference type="KEGG" id="deb:DehaBAV1_0881"/>
<dbReference type="PATRIC" id="fig|216389.18.peg.931"/>
<dbReference type="HOGENOM" id="CLU_086499_3_2_0"/>
<dbReference type="GO" id="GO:0022625">
    <property type="term" value="C:cytosolic large ribosomal subunit"/>
    <property type="evidence" value="ECO:0007669"/>
    <property type="project" value="TreeGrafter"/>
</dbReference>
<dbReference type="GO" id="GO:0003729">
    <property type="term" value="F:mRNA binding"/>
    <property type="evidence" value="ECO:0007669"/>
    <property type="project" value="TreeGrafter"/>
</dbReference>
<dbReference type="GO" id="GO:0003735">
    <property type="term" value="F:structural constituent of ribosome"/>
    <property type="evidence" value="ECO:0007669"/>
    <property type="project" value="InterPro"/>
</dbReference>
<dbReference type="GO" id="GO:0006412">
    <property type="term" value="P:translation"/>
    <property type="evidence" value="ECO:0007669"/>
    <property type="project" value="UniProtKB-UniRule"/>
</dbReference>
<dbReference type="CDD" id="cd00387">
    <property type="entry name" value="Ribosomal_L7_L12"/>
    <property type="match status" value="1"/>
</dbReference>
<dbReference type="FunFam" id="3.30.1390.10:FF:000001">
    <property type="entry name" value="50S ribosomal protein L7/L12"/>
    <property type="match status" value="1"/>
</dbReference>
<dbReference type="Gene3D" id="3.30.1390.10">
    <property type="match status" value="1"/>
</dbReference>
<dbReference type="Gene3D" id="1.20.5.710">
    <property type="entry name" value="Single helix bin"/>
    <property type="match status" value="1"/>
</dbReference>
<dbReference type="HAMAP" id="MF_00368">
    <property type="entry name" value="Ribosomal_bL12"/>
    <property type="match status" value="1"/>
</dbReference>
<dbReference type="InterPro" id="IPR000206">
    <property type="entry name" value="Ribosomal_bL12"/>
</dbReference>
<dbReference type="InterPro" id="IPR013823">
    <property type="entry name" value="Ribosomal_bL12_C"/>
</dbReference>
<dbReference type="InterPro" id="IPR014719">
    <property type="entry name" value="Ribosomal_bL12_C/ClpS-like"/>
</dbReference>
<dbReference type="InterPro" id="IPR008932">
    <property type="entry name" value="Ribosomal_bL12_oligo"/>
</dbReference>
<dbReference type="InterPro" id="IPR036235">
    <property type="entry name" value="Ribosomal_bL12_oligo_N_sf"/>
</dbReference>
<dbReference type="NCBIfam" id="TIGR00855">
    <property type="entry name" value="L12"/>
    <property type="match status" value="1"/>
</dbReference>
<dbReference type="PANTHER" id="PTHR45987">
    <property type="entry name" value="39S RIBOSOMAL PROTEIN L12"/>
    <property type="match status" value="1"/>
</dbReference>
<dbReference type="PANTHER" id="PTHR45987:SF4">
    <property type="entry name" value="LARGE RIBOSOMAL SUBUNIT PROTEIN BL12M"/>
    <property type="match status" value="1"/>
</dbReference>
<dbReference type="Pfam" id="PF00542">
    <property type="entry name" value="Ribosomal_L12"/>
    <property type="match status" value="1"/>
</dbReference>
<dbReference type="Pfam" id="PF16320">
    <property type="entry name" value="Ribosomal_L12_N"/>
    <property type="match status" value="1"/>
</dbReference>
<dbReference type="SUPFAM" id="SSF54736">
    <property type="entry name" value="ClpS-like"/>
    <property type="match status" value="1"/>
</dbReference>
<dbReference type="SUPFAM" id="SSF48300">
    <property type="entry name" value="Ribosomal protein L7/12, oligomerisation (N-terminal) domain"/>
    <property type="match status" value="1"/>
</dbReference>
<evidence type="ECO:0000255" key="1">
    <source>
        <dbReference type="HAMAP-Rule" id="MF_00368"/>
    </source>
</evidence>
<evidence type="ECO:0000305" key="2"/>
<name>RL7_DEHMB</name>
<accession>A5FQQ9</accession>
<sequence>MTIDEMMSAIKGMTVIELSELVKALEKEFGVSAAVAVAAPAAGGAAAAAAVEEKTEFNVILKDVGANKINVIKAVRELTSLGLKEAKDMVEAAPKAVKENVSKEEADAAKKALEAAGATVEIK</sequence>
<organism>
    <name type="scientific">Dehalococcoides mccartyi (strain ATCC BAA-2100 / JCM 16839 / KCTC 5957 / BAV1)</name>
    <dbReference type="NCBI Taxonomy" id="216389"/>
    <lineage>
        <taxon>Bacteria</taxon>
        <taxon>Bacillati</taxon>
        <taxon>Chloroflexota</taxon>
        <taxon>Dehalococcoidia</taxon>
        <taxon>Dehalococcoidales</taxon>
        <taxon>Dehalococcoidaceae</taxon>
        <taxon>Dehalococcoides</taxon>
    </lineage>
</organism>
<keyword id="KW-0687">Ribonucleoprotein</keyword>
<keyword id="KW-0689">Ribosomal protein</keyword>
<protein>
    <recommendedName>
        <fullName evidence="1">Large ribosomal subunit protein bL12</fullName>
    </recommendedName>
    <alternativeName>
        <fullName evidence="2">50S ribosomal protein L7/L12</fullName>
    </alternativeName>
</protein>
<gene>
    <name evidence="1" type="primary">rplL</name>
    <name type="ordered locus">DehaBAV1_0881</name>
</gene>
<comment type="function">
    <text evidence="1">Forms part of the ribosomal stalk which helps the ribosome interact with GTP-bound translation factors. Is thus essential for accurate translation.</text>
</comment>
<comment type="subunit">
    <text evidence="1">Homodimer. Part of the ribosomal stalk of the 50S ribosomal subunit. Forms a multimeric L10(L12)X complex, where L10 forms an elongated spine to which 2 to 4 L12 dimers bind in a sequential fashion. Binds GTP-bound translation factors.</text>
</comment>
<comment type="similarity">
    <text evidence="1">Belongs to the bacterial ribosomal protein bL12 family.</text>
</comment>